<sequence>MALEVLEALDSARTQWYHVTAIVIAGMGFFTDAYDLFCITTVSKLLGRLYYFDPSTGKPGKLPNNVNNLVTGVALVGTLSGQLFFGYLGDKLGRKKVYGVTLILMVACAICSGLSFGASAKSVMGTLCFFRFWLGFGIGGDYPLSATIMSEYANKRTRGAFIAAVFAMQGVGIIFAGLVSMCLSAGFKASYHAPSFHDDPIMSTQPQGDLMWRLVLMIGAVPAAMTYYWRMKMPETGRYTAIIEGNAKQAAADMARVLDIEIQAEQDKLAEFKAANDYPLWSNEFFTRHGRHLIGTMTSWFLLDIAFYSQNLTQKDIFPAMGLIDKDFEMNAIQEVFETSRAMFVIALFGTFPGYWFTVFFIEKLGRYKIQLIGFFMMSVFMFIIGVKYDYLRNENSHMFALLYGLTFFFANFGPNSTTFVLPAELFPTRVRSTCHALSAAAGKAGAMVGAFGIQNYTQKGEQKQIKHAMMILAVTNLIGFFCSFLVTETKGRSLEEISGEDGRESELTPTPPNNRVPTRQEPRSETM</sequence>
<proteinExistence type="evidence at protein level"/>
<accession>B5RHV8</accession>
<dbReference type="EMBL" id="AP010874">
    <property type="protein sequence ID" value="BAG71408.1"/>
    <property type="molecule type" value="Genomic_DNA"/>
</dbReference>
<dbReference type="SMR" id="B5RHV8"/>
<dbReference type="GlyCosmos" id="B5RHV8">
    <property type="glycosylation" value="1 site, No reported glycans"/>
</dbReference>
<dbReference type="OMA" id="QIGFAGK"/>
<dbReference type="OrthoDB" id="433512at2759"/>
<dbReference type="GO" id="GO:0085042">
    <property type="term" value="C:periarbuscular membrane"/>
    <property type="evidence" value="ECO:0000250"/>
    <property type="project" value="UniProtKB"/>
</dbReference>
<dbReference type="GO" id="GO:0005886">
    <property type="term" value="C:plasma membrane"/>
    <property type="evidence" value="ECO:0007669"/>
    <property type="project" value="UniProtKB-SubCell"/>
</dbReference>
<dbReference type="GO" id="GO:0005315">
    <property type="term" value="F:phosphate transmembrane transporter activity"/>
    <property type="evidence" value="ECO:0007669"/>
    <property type="project" value="InterPro"/>
</dbReference>
<dbReference type="GO" id="GO:0015293">
    <property type="term" value="F:symporter activity"/>
    <property type="evidence" value="ECO:0007669"/>
    <property type="project" value="UniProtKB-KW"/>
</dbReference>
<dbReference type="GO" id="GO:0036377">
    <property type="term" value="P:arbuscular mycorrhizal association"/>
    <property type="evidence" value="ECO:0000315"/>
    <property type="project" value="UniProtKB"/>
</dbReference>
<dbReference type="GO" id="GO:0016036">
    <property type="term" value="P:cellular response to phosphate starvation"/>
    <property type="evidence" value="ECO:0000315"/>
    <property type="project" value="UniProtKB"/>
</dbReference>
<dbReference type="GO" id="GO:0010247">
    <property type="term" value="P:detection of phosphate ion"/>
    <property type="evidence" value="ECO:0000315"/>
    <property type="project" value="UniProtKB"/>
</dbReference>
<dbReference type="GO" id="GO:0010311">
    <property type="term" value="P:lateral root formation"/>
    <property type="evidence" value="ECO:0000315"/>
    <property type="project" value="UniProtKB"/>
</dbReference>
<dbReference type="GO" id="GO:0006817">
    <property type="term" value="P:phosphate ion transport"/>
    <property type="evidence" value="ECO:0007669"/>
    <property type="project" value="UniProtKB-KW"/>
</dbReference>
<dbReference type="GO" id="GO:0009610">
    <property type="term" value="P:response to symbiotic fungus"/>
    <property type="evidence" value="ECO:0000270"/>
    <property type="project" value="UniProtKB"/>
</dbReference>
<dbReference type="CDD" id="cd17364">
    <property type="entry name" value="MFS_PhT"/>
    <property type="match status" value="1"/>
</dbReference>
<dbReference type="FunFam" id="1.20.1250.20:FF:000175">
    <property type="entry name" value="Inorganic phosphate transporter 1-6"/>
    <property type="match status" value="1"/>
</dbReference>
<dbReference type="Gene3D" id="1.20.1250.20">
    <property type="entry name" value="MFS general substrate transporter like domains"/>
    <property type="match status" value="1"/>
</dbReference>
<dbReference type="InterPro" id="IPR020846">
    <property type="entry name" value="MFS_dom"/>
</dbReference>
<dbReference type="InterPro" id="IPR005828">
    <property type="entry name" value="MFS_sugar_transport-like"/>
</dbReference>
<dbReference type="InterPro" id="IPR036259">
    <property type="entry name" value="MFS_trans_sf"/>
</dbReference>
<dbReference type="InterPro" id="IPR004738">
    <property type="entry name" value="Phos_permease"/>
</dbReference>
<dbReference type="NCBIfam" id="TIGR00887">
    <property type="entry name" value="2A0109"/>
    <property type="match status" value="1"/>
</dbReference>
<dbReference type="PANTHER" id="PTHR24064">
    <property type="entry name" value="SOLUTE CARRIER FAMILY 22 MEMBER"/>
    <property type="match status" value="1"/>
</dbReference>
<dbReference type="Pfam" id="PF00083">
    <property type="entry name" value="Sugar_tr"/>
    <property type="match status" value="1"/>
</dbReference>
<dbReference type="SUPFAM" id="SSF103473">
    <property type="entry name" value="MFS general substrate transporter"/>
    <property type="match status" value="1"/>
</dbReference>
<dbReference type="PROSITE" id="PS50850">
    <property type="entry name" value="MFS"/>
    <property type="match status" value="1"/>
</dbReference>
<feature type="chain" id="PRO_0000450034" description="Low affinity inorganic phosphate transporter 4">
    <location>
        <begin position="1"/>
        <end position="528"/>
    </location>
</feature>
<feature type="topological domain" description="Cytoplasmic" evidence="8">
    <location>
        <begin position="1"/>
        <end position="18"/>
    </location>
</feature>
<feature type="transmembrane region" description="Helical; Name=1" evidence="2">
    <location>
        <begin position="19"/>
        <end position="39"/>
    </location>
</feature>
<feature type="topological domain" description="Extracellular" evidence="8">
    <location>
        <begin position="40"/>
        <end position="68"/>
    </location>
</feature>
<feature type="transmembrane region" description="Helical; Name=2" evidence="2">
    <location>
        <begin position="69"/>
        <end position="89"/>
    </location>
</feature>
<feature type="topological domain" description="Cytoplasmic" evidence="8">
    <location>
        <begin position="90"/>
        <end position="96"/>
    </location>
</feature>
<feature type="transmembrane region" description="Helical; Name=3" evidence="2">
    <location>
        <begin position="97"/>
        <end position="117"/>
    </location>
</feature>
<feature type="topological domain" description="Extracellular" evidence="8">
    <location>
        <begin position="118"/>
        <end position="122"/>
    </location>
</feature>
<feature type="transmembrane region" description="Helical; Name=4" evidence="2">
    <location>
        <begin position="123"/>
        <end position="143"/>
    </location>
</feature>
<feature type="topological domain" description="Cytoplasmic" evidence="8">
    <location>
        <begin position="144"/>
        <end position="158"/>
    </location>
</feature>
<feature type="transmembrane region" description="Helical; Name=5" evidence="2">
    <location>
        <begin position="159"/>
        <end position="179"/>
    </location>
</feature>
<feature type="topological domain" description="Extracellular" evidence="8">
    <location>
        <begin position="180"/>
        <end position="208"/>
    </location>
</feature>
<feature type="transmembrane region" description="Helical; Name=6" evidence="2">
    <location>
        <begin position="209"/>
        <end position="229"/>
    </location>
</feature>
<feature type="topological domain" description="Cytoplasmic" evidence="8">
    <location>
        <begin position="230"/>
        <end position="292"/>
    </location>
</feature>
<feature type="transmembrane region" description="Helical; Name=7" evidence="2">
    <location>
        <begin position="293"/>
        <end position="313"/>
    </location>
</feature>
<feature type="topological domain" description="Extracellular" evidence="8">
    <location>
        <begin position="314"/>
        <end position="341"/>
    </location>
</feature>
<feature type="transmembrane region" description="Helical; Name=8" evidence="2">
    <location>
        <begin position="342"/>
        <end position="362"/>
    </location>
</feature>
<feature type="topological domain" description="Cytoplasmic" evidence="8">
    <location>
        <begin position="363"/>
        <end position="371"/>
    </location>
</feature>
<feature type="transmembrane region" description="Helical; Name=9" evidence="2">
    <location>
        <begin position="372"/>
        <end position="392"/>
    </location>
</feature>
<feature type="topological domain" description="Extracellular" evidence="8">
    <location>
        <begin position="393"/>
        <end position="401"/>
    </location>
</feature>
<feature type="transmembrane region" description="Helical; Name=10" evidence="2">
    <location>
        <begin position="402"/>
        <end position="422"/>
    </location>
</feature>
<feature type="topological domain" description="Cytoplasmic" evidence="8">
    <location>
        <begin position="423"/>
        <end position="433"/>
    </location>
</feature>
<feature type="transmembrane region" description="Helical; Name=11" evidence="2">
    <location>
        <begin position="434"/>
        <end position="454"/>
    </location>
</feature>
<feature type="topological domain" description="Extracellular" evidence="8">
    <location>
        <begin position="455"/>
        <end position="467"/>
    </location>
</feature>
<feature type="transmembrane region" description="Helical; Name=12" evidence="2">
    <location>
        <begin position="468"/>
        <end position="488"/>
    </location>
</feature>
<feature type="topological domain" description="Cytoplasmic" evidence="8">
    <location>
        <begin position="489"/>
        <end position="528"/>
    </location>
</feature>
<feature type="region of interest" description="Disordered" evidence="4">
    <location>
        <begin position="496"/>
        <end position="528"/>
    </location>
</feature>
<feature type="compositionally biased region" description="Basic and acidic residues" evidence="4">
    <location>
        <begin position="496"/>
        <end position="507"/>
    </location>
</feature>
<feature type="compositionally biased region" description="Basic and acidic residues" evidence="4">
    <location>
        <begin position="519"/>
        <end position="528"/>
    </location>
</feature>
<feature type="glycosylation site" description="N-linked (GlcNAc...) asparagine" evidence="3">
    <location>
        <position position="456"/>
    </location>
</feature>
<reference key="1">
    <citation type="journal article" date="2009" name="Plant J.">
        <title>Apoplastic plant subtilases support arbuscular mycorrhiza development in Lotus japonicus.</title>
        <authorList>
            <person name="Takeda N."/>
            <person name="Sato S."/>
            <person name="Asamizu E."/>
            <person name="Tabata S."/>
            <person name="Parniske M."/>
        </authorList>
    </citation>
    <scope>NUCLEOTIDE SEQUENCE [GENOMIC DNA]</scope>
    <scope>INDUCTION BY GLOMEROMYCOTA INTRARADICES</scope>
    <source>
        <strain>cv. Miyakojima MG-20</strain>
    </source>
</reference>
<reference key="2">
    <citation type="journal article" date="2016" name="Plant Cell Environ.">
        <title>The phosphate transporters LjPT4 and MtPT4 mediate early root responses to phosphate status in non mycorrhizal roots.</title>
        <authorList>
            <person name="Volpe V."/>
            <person name="Giovannetti M."/>
            <person name="Sun X.-G."/>
            <person name="Fiorilli V."/>
            <person name="Bonfante P."/>
        </authorList>
    </citation>
    <scope>FUNCTION</scope>
    <scope>DISRUPTION PHENOTYPE</scope>
    <scope>CATALYTIC ACTIVITY</scope>
    <scope>TISSUE SPECIFICITY</scope>
    <scope>INDUCTION BY ARBUSCULAR MYCORRHIZAL FUNGI</scope>
    <source>
        <strain>cv. Miyakojima MG-20</strain>
    </source>
</reference>
<evidence type="ECO:0000250" key="1">
    <source>
        <dbReference type="UniProtKB" id="Q8GSG4"/>
    </source>
</evidence>
<evidence type="ECO:0000255" key="2"/>
<evidence type="ECO:0000255" key="3">
    <source>
        <dbReference type="PROSITE-ProRule" id="PRU00498"/>
    </source>
</evidence>
<evidence type="ECO:0000256" key="4">
    <source>
        <dbReference type="SAM" id="MobiDB-lite"/>
    </source>
</evidence>
<evidence type="ECO:0000269" key="5">
    <source>
    </source>
</evidence>
<evidence type="ECO:0000269" key="6">
    <source>
    </source>
</evidence>
<evidence type="ECO:0000303" key="7">
    <source>
    </source>
</evidence>
<evidence type="ECO:0000305" key="8"/>
<protein>
    <recommendedName>
        <fullName evidence="7">Low affinity inorganic phosphate transporter 4</fullName>
        <shortName evidence="7">LjPT4</shortName>
        <shortName evidence="8">LjPht1;4</shortName>
    </recommendedName>
    <alternativeName>
        <fullName evidence="7">Arbuscular mycorrhiza-induced phosphate transporter PT4</fullName>
        <shortName evidence="7">AM-induced phosphate transporter PT4</shortName>
    </alternativeName>
    <alternativeName>
        <fullName evidence="8">H(+)/Pi cotransporter PT4</fullName>
    </alternativeName>
</protein>
<name>PHT14_LOTJA</name>
<comment type="function">
    <text evidence="6">Low-affinity transporter for external inorganic phosphate (Pi) probably involved in the acquisition of phosphate released by arbuscular mycorrhizal (AM) fungi (e.g. Gigaspora margarita and Funnelliformis mosseae) during AM symbiosis; required for propper mycorrhizal arbuscule morphology (PubMed:26476189). Acts as a Pi-sensing machinery at the root tip level, independently of AM fungi, involved in the regulation of early root branching and lateral roots formation (PubMed:26476189).</text>
</comment>
<comment type="catalytic activity">
    <reaction evidence="1">
        <text>phosphate(in) + H(+)(in) = phosphate(out) + H(+)(out)</text>
        <dbReference type="Rhea" id="RHEA:29939"/>
        <dbReference type="ChEBI" id="CHEBI:15378"/>
        <dbReference type="ChEBI" id="CHEBI:43474"/>
    </reaction>
    <physiologicalReaction direction="right-to-left" evidence="1">
        <dbReference type="Rhea" id="RHEA:29941"/>
    </physiologicalReaction>
</comment>
<comment type="subcellular location">
    <subcellularLocation>
        <location evidence="1">Cell membrane</location>
        <topology evidence="2">Multi-pass membrane protein</topology>
    </subcellularLocation>
    <text evidence="1">Present on the periarbuscular membrane in cells containing arbuscules during arbuscular mycorrhizal (AM) symbiosis with AM fungi.</text>
</comment>
<comment type="tissue specificity">
    <text evidence="6">Expressed only in mycorrhizal roots, exclusively in cortical cells containing arbuscules, upon arbuscular mycorrhizal (AM) symbiosis with AM fungi (e.g. Gigaspora margarita and Funnelliformis mosseae) (PubMed:26476189). Also observed in root tips of non-mycorrhizal roots, in a phosphate (Pi) depended-manner, highest expression levels being observed in low Pi conditions (PubMed:26476189).</text>
</comment>
<comment type="induction">
    <text evidence="5 6">Induced in roots during development of arbuscular mycorrhiza (AM) upon colonization by AM fungus (e.g. Glomeromycota intraradices, Gigaspora margarita and Funnelliformis mosseae) (PubMed:19220794, PubMed:26476189). Induced in root tips by low phosphate (Pi) levels (PubMed:26476189).</text>
</comment>
<comment type="disruption phenotype">
    <text evidence="6">Impaired phosphate (Pi) starvation induction of lateral roots formation (PubMed:26476189). Abnormal structures of arbuscular mycorrhiza (AM) fungi (e.g. Gigaspora margarita and Funnelliformis mosseae) during AM symbiosis with swollen main arbuscule trunks and reduced branching (PubMed:26476189). Lower symbiotic Pi transfer for AM fungi to the host plant (PubMed:26476189).</text>
</comment>
<comment type="miscellaneous">
    <text evidence="8">Although related to the sugar transporter family, it does not transport sugars.</text>
</comment>
<comment type="similarity">
    <text evidence="8">Belongs to the major facilitator superfamily. Phosphate:H(+) symporter (TC 2.A.1.9) family.</text>
</comment>
<organism>
    <name type="scientific">Lotus japonicus</name>
    <name type="common">Lotus corniculatus var. japonicus</name>
    <dbReference type="NCBI Taxonomy" id="34305"/>
    <lineage>
        <taxon>Eukaryota</taxon>
        <taxon>Viridiplantae</taxon>
        <taxon>Streptophyta</taxon>
        <taxon>Embryophyta</taxon>
        <taxon>Tracheophyta</taxon>
        <taxon>Spermatophyta</taxon>
        <taxon>Magnoliopsida</taxon>
        <taxon>eudicotyledons</taxon>
        <taxon>Gunneridae</taxon>
        <taxon>Pentapetalae</taxon>
        <taxon>rosids</taxon>
        <taxon>fabids</taxon>
        <taxon>Fabales</taxon>
        <taxon>Fabaceae</taxon>
        <taxon>Papilionoideae</taxon>
        <taxon>50 kb inversion clade</taxon>
        <taxon>NPAAA clade</taxon>
        <taxon>Hologalegina</taxon>
        <taxon>robinioid clade</taxon>
        <taxon>Loteae</taxon>
        <taxon>Lotus</taxon>
    </lineage>
</organism>
<gene>
    <name evidence="7" type="primary">PT4</name>
</gene>
<keyword id="KW-1003">Cell membrane</keyword>
<keyword id="KW-0325">Glycoprotein</keyword>
<keyword id="KW-0472">Membrane</keyword>
<keyword id="KW-0592">Phosphate transport</keyword>
<keyword id="KW-0769">Symport</keyword>
<keyword id="KW-0812">Transmembrane</keyword>
<keyword id="KW-1133">Transmembrane helix</keyword>
<keyword id="KW-0813">Transport</keyword>